<feature type="chain" id="PRO_0000089308" description="PGA biosynthesis protein CapA">
    <location>
        <begin position="1"/>
        <end position="380"/>
    </location>
</feature>
<feature type="sequence variant" description="In strain: IFO 16449.">
    <original>KQ</original>
    <variation>TK</variation>
    <location>
        <begin position="164"/>
        <end position="165"/>
    </location>
</feature>
<organism>
    <name type="scientific">Bacillus subtilis (strain 168)</name>
    <dbReference type="NCBI Taxonomy" id="224308"/>
    <lineage>
        <taxon>Bacteria</taxon>
        <taxon>Bacillati</taxon>
        <taxon>Bacillota</taxon>
        <taxon>Bacilli</taxon>
        <taxon>Bacillales</taxon>
        <taxon>Bacillaceae</taxon>
        <taxon>Bacillus</taxon>
    </lineage>
</organism>
<comment type="function">
    <text>Seems to be required for maximum PGA (gamma-polyglutamic acid) production.</text>
</comment>
<comment type="disruption phenotype">
    <text evidence="1">Cells produce PGA but at a greatly reduced level.</text>
</comment>
<comment type="similarity">
    <text evidence="2">Belongs to the CapA family.</text>
</comment>
<evidence type="ECO:0000269" key="1">
    <source>
    </source>
</evidence>
<evidence type="ECO:0000305" key="2"/>
<gene>
    <name type="primary">capA</name>
    <name type="synonym">pgsA</name>
    <name type="synonym">ywtB</name>
    <name type="ordered locus">BSU35880</name>
</gene>
<proteinExistence type="inferred from homology"/>
<sequence length="380" mass="42760">MKKELSFHEKLLKLTKQQKKKTNKHVFIAIPIVFVLMFAFMWAGKAETPKVKTYSDDVLSASFVGDIMMGRYVEKVTEQKGADSIFQYVEPIFRASDYVAGNFENPVTYQKNYKQADKEIHLQTNKESVKVLKDMNFTVLNSANNHAMDYGVQGMKDTLGEFAKQNLDIVGAGYSLSDAKKKISYQKVNGVTIATLGFTDVSGKGFAAKKNTPGVLPADPEIFIPMISEAKKHADIVVVQSHWGQEYDNDPNDRQRQLARAMSDAGADIIVGHHPHVLEPIEVYNGTVIFYSLGNFVFDQGWTRTRDSALVQYHLKKNGTGRFEVTPIDIHEATPAPVKKDSLKQKTIIRELTKDSNFAWKVEDGKLTFDIDHSDKLKSK</sequence>
<accession>P96738</accession>
<accession>Q795C8</accession>
<accession>Q9AJM1</accession>
<keyword id="KW-1185">Reference proteome</keyword>
<protein>
    <recommendedName>
        <fullName>PGA biosynthesis protein CapA</fullName>
    </recommendedName>
</protein>
<dbReference type="EMBL" id="Z92954">
    <property type="protein sequence ID" value="CAB07469.1"/>
    <property type="molecule type" value="Genomic_DNA"/>
</dbReference>
<dbReference type="EMBL" id="AB016245">
    <property type="protein sequence ID" value="BAA85265.1"/>
    <property type="molecule type" value="Genomic_DNA"/>
</dbReference>
<dbReference type="EMBL" id="AB039950">
    <property type="protein sequence ID" value="BAB13486.1"/>
    <property type="molecule type" value="Genomic_DNA"/>
</dbReference>
<dbReference type="EMBL" id="AB046355">
    <property type="protein sequence ID" value="BAB40950.1"/>
    <property type="molecule type" value="Genomic_DNA"/>
</dbReference>
<dbReference type="EMBL" id="AL009126">
    <property type="protein sequence ID" value="CAB15605.1"/>
    <property type="molecule type" value="Genomic_DNA"/>
</dbReference>
<dbReference type="PIR" id="H70069">
    <property type="entry name" value="H70069"/>
</dbReference>
<dbReference type="RefSeq" id="NP_391469.1">
    <property type="nucleotide sequence ID" value="NC_000964.3"/>
</dbReference>
<dbReference type="RefSeq" id="WP_003243306.1">
    <property type="nucleotide sequence ID" value="NZ_OZ025638.1"/>
</dbReference>
<dbReference type="SMR" id="P96738"/>
<dbReference type="FunCoup" id="P96738">
    <property type="interactions" value="17"/>
</dbReference>
<dbReference type="STRING" id="224308.BSU35880"/>
<dbReference type="PaxDb" id="224308-BSU35880"/>
<dbReference type="DNASU" id="936830"/>
<dbReference type="EnsemblBacteria" id="CAB15605">
    <property type="protein sequence ID" value="CAB15605"/>
    <property type="gene ID" value="BSU_35880"/>
</dbReference>
<dbReference type="GeneID" id="936830"/>
<dbReference type="KEGG" id="bsu:BSU35880"/>
<dbReference type="PATRIC" id="fig|224308.179.peg.3884"/>
<dbReference type="eggNOG" id="COG2843">
    <property type="taxonomic scope" value="Bacteria"/>
</dbReference>
<dbReference type="InParanoid" id="P96738"/>
<dbReference type="OrthoDB" id="9810906at2"/>
<dbReference type="PhylomeDB" id="P96738"/>
<dbReference type="BioCyc" id="BSUB:BSU35880-MONOMER"/>
<dbReference type="Proteomes" id="UP000001570">
    <property type="component" value="Chromosome"/>
</dbReference>
<dbReference type="CDD" id="cd07381">
    <property type="entry name" value="MPP_CapA"/>
    <property type="match status" value="1"/>
</dbReference>
<dbReference type="Gene3D" id="3.60.21.10">
    <property type="match status" value="1"/>
</dbReference>
<dbReference type="InterPro" id="IPR019079">
    <property type="entry name" value="Capsule_synth_CapA"/>
</dbReference>
<dbReference type="InterPro" id="IPR052169">
    <property type="entry name" value="CW_Biosynth-Accessory"/>
</dbReference>
<dbReference type="InterPro" id="IPR029052">
    <property type="entry name" value="Metallo-depent_PP-like"/>
</dbReference>
<dbReference type="PANTHER" id="PTHR33393:SF13">
    <property type="entry name" value="PGA BIOSYNTHESIS PROTEIN CAPA"/>
    <property type="match status" value="1"/>
</dbReference>
<dbReference type="PANTHER" id="PTHR33393">
    <property type="entry name" value="POLYGLUTAMINE SYNTHESIS ACCESSORY PROTEIN RV0574C-RELATED"/>
    <property type="match status" value="1"/>
</dbReference>
<dbReference type="Pfam" id="PF09587">
    <property type="entry name" value="PGA_cap"/>
    <property type="match status" value="1"/>
</dbReference>
<dbReference type="SMART" id="SM00854">
    <property type="entry name" value="PGA_cap"/>
    <property type="match status" value="1"/>
</dbReference>
<dbReference type="SUPFAM" id="SSF56300">
    <property type="entry name" value="Metallo-dependent phosphatases"/>
    <property type="match status" value="1"/>
</dbReference>
<name>CAPA_BACSU</name>
<reference key="1">
    <citation type="journal article" date="1997" name="Microbiology">
        <title>The Bacillus subtilis genome from gerBC (311 degrees) to licR (334 degrees).</title>
        <authorList>
            <person name="Presecan E."/>
            <person name="Moszer I."/>
            <person name="Boursier L."/>
            <person name="Cruz Ramos H."/>
            <person name="De La Fuente V."/>
            <person name="Hullo M.-F."/>
            <person name="Lelong C."/>
            <person name="Schleich S."/>
            <person name="Sekowska A."/>
            <person name="Song B.H."/>
            <person name="Villani G."/>
            <person name="Kunst F."/>
            <person name="Danchin A."/>
            <person name="Glaser P."/>
        </authorList>
    </citation>
    <scope>NUCLEOTIDE SEQUENCE [GENOMIC DNA]</scope>
    <source>
        <strain>168</strain>
    </source>
</reference>
<reference key="2">
    <citation type="journal article" date="1999" name="Biochem. Biophys. Res. Commun.">
        <title>A poly-gamma-glutamate synthetic system of Bacillus subtilis IFO 3336: gene cloning and biochemical analysis of poly-gammma-glutamate produced by Escherichia coli clone cells.</title>
        <authorList>
            <person name="Ashiuchi M."/>
            <person name="Soda K."/>
            <person name="Misono H."/>
        </authorList>
    </citation>
    <scope>NUCLEOTIDE SEQUENCE [GENOMIC DNA]</scope>
    <source>
        <strain>NBRC 3336</strain>
    </source>
</reference>
<reference key="3">
    <citation type="submission" date="2000-03" db="EMBL/GenBank/DDBJ databases">
        <authorList>
            <person name="Tran L.P."/>
            <person name="Itoh Y."/>
        </authorList>
    </citation>
    <scope>NUCLEOTIDE SEQUENCE [GENOMIC DNA]</scope>
    <source>
        <strain>Asahikawa</strain>
    </source>
</reference>
<reference key="4">
    <citation type="journal article" date="2002" name="J. Bacteriol.">
        <title>Characterization of the Bacillus subtilis ywsC gene, involved in gamma-polyglutamic acid production.</title>
        <authorList>
            <person name="Urushibata Y."/>
            <person name="Tokuyama S."/>
            <person name="Tahara Y."/>
        </authorList>
    </citation>
    <scope>NUCLEOTIDE SEQUENCE [GENOMIC DNA]</scope>
    <scope>DISRUPTION PHENOTYPE</scope>
    <source>
        <strain>NBRC 16449</strain>
    </source>
</reference>
<reference key="5">
    <citation type="journal article" date="1997" name="Nature">
        <title>The complete genome sequence of the Gram-positive bacterium Bacillus subtilis.</title>
        <authorList>
            <person name="Kunst F."/>
            <person name="Ogasawara N."/>
            <person name="Moszer I."/>
            <person name="Albertini A.M."/>
            <person name="Alloni G."/>
            <person name="Azevedo V."/>
            <person name="Bertero M.G."/>
            <person name="Bessieres P."/>
            <person name="Bolotin A."/>
            <person name="Borchert S."/>
            <person name="Borriss R."/>
            <person name="Boursier L."/>
            <person name="Brans A."/>
            <person name="Braun M."/>
            <person name="Brignell S.C."/>
            <person name="Bron S."/>
            <person name="Brouillet S."/>
            <person name="Bruschi C.V."/>
            <person name="Caldwell B."/>
            <person name="Capuano V."/>
            <person name="Carter N.M."/>
            <person name="Choi S.-K."/>
            <person name="Codani J.-J."/>
            <person name="Connerton I.F."/>
            <person name="Cummings N.J."/>
            <person name="Daniel R.A."/>
            <person name="Denizot F."/>
            <person name="Devine K.M."/>
            <person name="Duesterhoeft A."/>
            <person name="Ehrlich S.D."/>
            <person name="Emmerson P.T."/>
            <person name="Entian K.-D."/>
            <person name="Errington J."/>
            <person name="Fabret C."/>
            <person name="Ferrari E."/>
            <person name="Foulger D."/>
            <person name="Fritz C."/>
            <person name="Fujita M."/>
            <person name="Fujita Y."/>
            <person name="Fuma S."/>
            <person name="Galizzi A."/>
            <person name="Galleron N."/>
            <person name="Ghim S.-Y."/>
            <person name="Glaser P."/>
            <person name="Goffeau A."/>
            <person name="Golightly E.J."/>
            <person name="Grandi G."/>
            <person name="Guiseppi G."/>
            <person name="Guy B.J."/>
            <person name="Haga K."/>
            <person name="Haiech J."/>
            <person name="Harwood C.R."/>
            <person name="Henaut A."/>
            <person name="Hilbert H."/>
            <person name="Holsappel S."/>
            <person name="Hosono S."/>
            <person name="Hullo M.-F."/>
            <person name="Itaya M."/>
            <person name="Jones L.-M."/>
            <person name="Joris B."/>
            <person name="Karamata D."/>
            <person name="Kasahara Y."/>
            <person name="Klaerr-Blanchard M."/>
            <person name="Klein C."/>
            <person name="Kobayashi Y."/>
            <person name="Koetter P."/>
            <person name="Koningstein G."/>
            <person name="Krogh S."/>
            <person name="Kumano M."/>
            <person name="Kurita K."/>
            <person name="Lapidus A."/>
            <person name="Lardinois S."/>
            <person name="Lauber J."/>
            <person name="Lazarevic V."/>
            <person name="Lee S.-M."/>
            <person name="Levine A."/>
            <person name="Liu H."/>
            <person name="Masuda S."/>
            <person name="Mauel C."/>
            <person name="Medigue C."/>
            <person name="Medina N."/>
            <person name="Mellado R.P."/>
            <person name="Mizuno M."/>
            <person name="Moestl D."/>
            <person name="Nakai S."/>
            <person name="Noback M."/>
            <person name="Noone D."/>
            <person name="O'Reilly M."/>
            <person name="Ogawa K."/>
            <person name="Ogiwara A."/>
            <person name="Oudega B."/>
            <person name="Park S.-H."/>
            <person name="Parro V."/>
            <person name="Pohl T.M."/>
            <person name="Portetelle D."/>
            <person name="Porwollik S."/>
            <person name="Prescott A.M."/>
            <person name="Presecan E."/>
            <person name="Pujic P."/>
            <person name="Purnelle B."/>
            <person name="Rapoport G."/>
            <person name="Rey M."/>
            <person name="Reynolds S."/>
            <person name="Rieger M."/>
            <person name="Rivolta C."/>
            <person name="Rocha E."/>
            <person name="Roche B."/>
            <person name="Rose M."/>
            <person name="Sadaie Y."/>
            <person name="Sato T."/>
            <person name="Scanlan E."/>
            <person name="Schleich S."/>
            <person name="Schroeter R."/>
            <person name="Scoffone F."/>
            <person name="Sekiguchi J."/>
            <person name="Sekowska A."/>
            <person name="Seror S.J."/>
            <person name="Serror P."/>
            <person name="Shin B.-S."/>
            <person name="Soldo B."/>
            <person name="Sorokin A."/>
            <person name="Tacconi E."/>
            <person name="Takagi T."/>
            <person name="Takahashi H."/>
            <person name="Takemaru K."/>
            <person name="Takeuchi M."/>
            <person name="Tamakoshi A."/>
            <person name="Tanaka T."/>
            <person name="Terpstra P."/>
            <person name="Tognoni A."/>
            <person name="Tosato V."/>
            <person name="Uchiyama S."/>
            <person name="Vandenbol M."/>
            <person name="Vannier F."/>
            <person name="Vassarotti A."/>
            <person name="Viari A."/>
            <person name="Wambutt R."/>
            <person name="Wedler E."/>
            <person name="Wedler H."/>
            <person name="Weitzenegger T."/>
            <person name="Winters P."/>
            <person name="Wipat A."/>
            <person name="Yamamoto H."/>
            <person name="Yamane K."/>
            <person name="Yasumoto K."/>
            <person name="Yata K."/>
            <person name="Yoshida K."/>
            <person name="Yoshikawa H.-F."/>
            <person name="Zumstein E."/>
            <person name="Yoshikawa H."/>
            <person name="Danchin A."/>
        </authorList>
    </citation>
    <scope>NUCLEOTIDE SEQUENCE [LARGE SCALE GENOMIC DNA]</scope>
    <source>
        <strain>168</strain>
    </source>
</reference>